<keyword id="KW-0687">Ribonucleoprotein</keyword>
<keyword id="KW-0689">Ribosomal protein</keyword>
<name>RL7_COXBR</name>
<evidence type="ECO:0000255" key="1">
    <source>
        <dbReference type="HAMAP-Rule" id="MF_00368"/>
    </source>
</evidence>
<evidence type="ECO:0000305" key="2"/>
<sequence length="126" mass="13248">MAQLSKDDILEAVANMSVMDVVDLVKAMEEKFGVSAQAAIAVAGPVAGGEAAAAEEKTEFNVKMVSFGDNKIGVIKAIRTITGLGLKEAKDLVESVPSVVKESVSKEEAEKIKKELEEAGAKVELE</sequence>
<accession>A9NAL3</accession>
<gene>
    <name evidence="1" type="primary">rplL</name>
    <name type="ordered locus">COXBURSA331_A0326</name>
</gene>
<protein>
    <recommendedName>
        <fullName evidence="1">Large ribosomal subunit protein bL12</fullName>
    </recommendedName>
    <alternativeName>
        <fullName evidence="2">50S ribosomal protein L7/L12</fullName>
    </alternativeName>
</protein>
<comment type="function">
    <text evidence="1">Forms part of the ribosomal stalk which helps the ribosome interact with GTP-bound translation factors. Is thus essential for accurate translation.</text>
</comment>
<comment type="subunit">
    <text evidence="1">Homodimer. Part of the ribosomal stalk of the 50S ribosomal subunit. Forms a multimeric L10(L12)X complex, where L10 forms an elongated spine to which 2 to 4 L12 dimers bind in a sequential fashion. Binds GTP-bound translation factors.</text>
</comment>
<comment type="similarity">
    <text evidence="1">Belongs to the bacterial ribosomal protein bL12 family.</text>
</comment>
<reference key="1">
    <citation type="submission" date="2007-11" db="EMBL/GenBank/DDBJ databases">
        <title>Genome sequencing of phylogenetically and phenotypically diverse Coxiella burnetii isolates.</title>
        <authorList>
            <person name="Seshadri R."/>
            <person name="Samuel J.E."/>
        </authorList>
    </citation>
    <scope>NUCLEOTIDE SEQUENCE [LARGE SCALE GENOMIC DNA]</scope>
    <source>
        <strain>RSA 331 / Henzerling II</strain>
    </source>
</reference>
<feature type="chain" id="PRO_1000079791" description="Large ribosomal subunit protein bL12">
    <location>
        <begin position="1"/>
        <end position="126"/>
    </location>
</feature>
<proteinExistence type="inferred from homology"/>
<organism>
    <name type="scientific">Coxiella burnetii (strain RSA 331 / Henzerling II)</name>
    <dbReference type="NCBI Taxonomy" id="360115"/>
    <lineage>
        <taxon>Bacteria</taxon>
        <taxon>Pseudomonadati</taxon>
        <taxon>Pseudomonadota</taxon>
        <taxon>Gammaproteobacteria</taxon>
        <taxon>Legionellales</taxon>
        <taxon>Coxiellaceae</taxon>
        <taxon>Coxiella</taxon>
    </lineage>
</organism>
<dbReference type="EMBL" id="CP000890">
    <property type="protein sequence ID" value="ABX78994.1"/>
    <property type="molecule type" value="Genomic_DNA"/>
</dbReference>
<dbReference type="RefSeq" id="WP_005771617.1">
    <property type="nucleotide sequence ID" value="NC_010117.1"/>
</dbReference>
<dbReference type="SMR" id="A9NAL3"/>
<dbReference type="KEGG" id="cbs:COXBURSA331_A0326"/>
<dbReference type="HOGENOM" id="CLU_086499_3_2_6"/>
<dbReference type="GO" id="GO:0022625">
    <property type="term" value="C:cytosolic large ribosomal subunit"/>
    <property type="evidence" value="ECO:0007669"/>
    <property type="project" value="TreeGrafter"/>
</dbReference>
<dbReference type="GO" id="GO:0003729">
    <property type="term" value="F:mRNA binding"/>
    <property type="evidence" value="ECO:0007669"/>
    <property type="project" value="TreeGrafter"/>
</dbReference>
<dbReference type="GO" id="GO:0003735">
    <property type="term" value="F:structural constituent of ribosome"/>
    <property type="evidence" value="ECO:0007669"/>
    <property type="project" value="InterPro"/>
</dbReference>
<dbReference type="GO" id="GO:0006412">
    <property type="term" value="P:translation"/>
    <property type="evidence" value="ECO:0007669"/>
    <property type="project" value="UniProtKB-UniRule"/>
</dbReference>
<dbReference type="CDD" id="cd00387">
    <property type="entry name" value="Ribosomal_L7_L12"/>
    <property type="match status" value="1"/>
</dbReference>
<dbReference type="FunFam" id="3.30.1390.10:FF:000001">
    <property type="entry name" value="50S ribosomal protein L7/L12"/>
    <property type="match status" value="1"/>
</dbReference>
<dbReference type="Gene3D" id="3.30.1390.10">
    <property type="match status" value="1"/>
</dbReference>
<dbReference type="Gene3D" id="1.20.5.710">
    <property type="entry name" value="Single helix bin"/>
    <property type="match status" value="1"/>
</dbReference>
<dbReference type="HAMAP" id="MF_00368">
    <property type="entry name" value="Ribosomal_bL12"/>
    <property type="match status" value="1"/>
</dbReference>
<dbReference type="InterPro" id="IPR000206">
    <property type="entry name" value="Ribosomal_bL12"/>
</dbReference>
<dbReference type="InterPro" id="IPR013823">
    <property type="entry name" value="Ribosomal_bL12_C"/>
</dbReference>
<dbReference type="InterPro" id="IPR014719">
    <property type="entry name" value="Ribosomal_bL12_C/ClpS-like"/>
</dbReference>
<dbReference type="InterPro" id="IPR008932">
    <property type="entry name" value="Ribosomal_bL12_oligo"/>
</dbReference>
<dbReference type="InterPro" id="IPR036235">
    <property type="entry name" value="Ribosomal_bL12_oligo_N_sf"/>
</dbReference>
<dbReference type="NCBIfam" id="TIGR00855">
    <property type="entry name" value="L12"/>
    <property type="match status" value="1"/>
</dbReference>
<dbReference type="PANTHER" id="PTHR45987">
    <property type="entry name" value="39S RIBOSOMAL PROTEIN L12"/>
    <property type="match status" value="1"/>
</dbReference>
<dbReference type="PANTHER" id="PTHR45987:SF4">
    <property type="entry name" value="LARGE RIBOSOMAL SUBUNIT PROTEIN BL12M"/>
    <property type="match status" value="1"/>
</dbReference>
<dbReference type="Pfam" id="PF00542">
    <property type="entry name" value="Ribosomal_L12"/>
    <property type="match status" value="1"/>
</dbReference>
<dbReference type="Pfam" id="PF16320">
    <property type="entry name" value="Ribosomal_L12_N"/>
    <property type="match status" value="1"/>
</dbReference>
<dbReference type="SUPFAM" id="SSF54736">
    <property type="entry name" value="ClpS-like"/>
    <property type="match status" value="1"/>
</dbReference>
<dbReference type="SUPFAM" id="SSF48300">
    <property type="entry name" value="Ribosomal protein L7/12, oligomerisation (N-terminal) domain"/>
    <property type="match status" value="1"/>
</dbReference>